<dbReference type="EMBL" id="CH476655">
    <property type="protein sequence ID" value="EDN04103.1"/>
    <property type="status" value="ALT_INIT"/>
    <property type="molecule type" value="Genomic_DNA"/>
</dbReference>
<dbReference type="SMR" id="A6QX61"/>
<dbReference type="STRING" id="339724.A6QX61"/>
<dbReference type="KEGG" id="aje:HCAG_01968"/>
<dbReference type="HOGENOM" id="CLU_011390_0_1_1"/>
<dbReference type="OrthoDB" id="2245at299071"/>
<dbReference type="Proteomes" id="UP000009297">
    <property type="component" value="Unassembled WGS sequence"/>
</dbReference>
<dbReference type="GO" id="GO:0005654">
    <property type="term" value="C:nucleoplasm"/>
    <property type="evidence" value="ECO:0007669"/>
    <property type="project" value="UniProtKB-SubCell"/>
</dbReference>
<dbReference type="GO" id="GO:0070545">
    <property type="term" value="C:PeBoW complex"/>
    <property type="evidence" value="ECO:0007669"/>
    <property type="project" value="TreeGrafter"/>
</dbReference>
<dbReference type="GO" id="GO:0030687">
    <property type="term" value="C:preribosome, large subunit precursor"/>
    <property type="evidence" value="ECO:0007669"/>
    <property type="project" value="UniProtKB-UniRule"/>
</dbReference>
<dbReference type="GO" id="GO:0043021">
    <property type="term" value="F:ribonucleoprotein complex binding"/>
    <property type="evidence" value="ECO:0007669"/>
    <property type="project" value="UniProtKB-UniRule"/>
</dbReference>
<dbReference type="GO" id="GO:0000466">
    <property type="term" value="P:maturation of 5.8S rRNA from tricistronic rRNA transcript (SSU-rRNA, 5.8S rRNA, LSU-rRNA)"/>
    <property type="evidence" value="ECO:0007669"/>
    <property type="project" value="UniProtKB-UniRule"/>
</dbReference>
<dbReference type="GO" id="GO:0000463">
    <property type="term" value="P:maturation of LSU-rRNA from tricistronic rRNA transcript (SSU-rRNA, 5.8S rRNA, LSU-rRNA)"/>
    <property type="evidence" value="ECO:0007669"/>
    <property type="project" value="UniProtKB-UniRule"/>
</dbReference>
<dbReference type="FunFam" id="2.130.10.10:FF:000061">
    <property type="entry name" value="Ribosome biogenesis protein BOP1 homolog"/>
    <property type="match status" value="1"/>
</dbReference>
<dbReference type="Gene3D" id="2.130.10.10">
    <property type="entry name" value="YVTN repeat-like/Quinoprotein amine dehydrogenase"/>
    <property type="match status" value="1"/>
</dbReference>
<dbReference type="HAMAP" id="MF_03027">
    <property type="entry name" value="BOP1"/>
    <property type="match status" value="1"/>
</dbReference>
<dbReference type="InterPro" id="IPR028598">
    <property type="entry name" value="BOP1/Erb1"/>
</dbReference>
<dbReference type="InterPro" id="IPR012953">
    <property type="entry name" value="BOP1_N_dom"/>
</dbReference>
<dbReference type="InterPro" id="IPR015943">
    <property type="entry name" value="WD40/YVTN_repeat-like_dom_sf"/>
</dbReference>
<dbReference type="InterPro" id="IPR019775">
    <property type="entry name" value="WD40_repeat_CS"/>
</dbReference>
<dbReference type="InterPro" id="IPR036322">
    <property type="entry name" value="WD40_repeat_dom_sf"/>
</dbReference>
<dbReference type="InterPro" id="IPR001680">
    <property type="entry name" value="WD40_rpt"/>
</dbReference>
<dbReference type="PANTHER" id="PTHR17605:SF0">
    <property type="entry name" value="RIBOSOME BIOGENESIS PROTEIN BOP1"/>
    <property type="match status" value="1"/>
</dbReference>
<dbReference type="PANTHER" id="PTHR17605">
    <property type="entry name" value="RIBOSOME BIOGENESIS PROTEIN BOP1 BLOCK OF PROLIFERATION 1 PROTEIN"/>
    <property type="match status" value="1"/>
</dbReference>
<dbReference type="Pfam" id="PF08145">
    <property type="entry name" value="BOP1NT"/>
    <property type="match status" value="1"/>
</dbReference>
<dbReference type="Pfam" id="PF00400">
    <property type="entry name" value="WD40"/>
    <property type="match status" value="3"/>
</dbReference>
<dbReference type="SMART" id="SM01035">
    <property type="entry name" value="BOP1NT"/>
    <property type="match status" value="1"/>
</dbReference>
<dbReference type="SMART" id="SM00320">
    <property type="entry name" value="WD40"/>
    <property type="match status" value="6"/>
</dbReference>
<dbReference type="SUPFAM" id="SSF50978">
    <property type="entry name" value="WD40 repeat-like"/>
    <property type="match status" value="1"/>
</dbReference>
<dbReference type="PROSITE" id="PS00678">
    <property type="entry name" value="WD_REPEATS_1"/>
    <property type="match status" value="1"/>
</dbReference>
<dbReference type="PROSITE" id="PS50082">
    <property type="entry name" value="WD_REPEATS_2"/>
    <property type="match status" value="2"/>
</dbReference>
<dbReference type="PROSITE" id="PS50294">
    <property type="entry name" value="WD_REPEATS_REGION"/>
    <property type="match status" value="2"/>
</dbReference>
<sequence length="788" mass="88266">MGDLKGSRKRKAVTRDLDEEPGVVSGDELNLDALDGDLSDKSHDTEHSSDSEIELVDDLSSDDGEEYEDEFDSDEIPSDIESKPIREKSKPDRGVDIFVRGEEVTSDGELGDGYDDDKLNYRVTKDANGNERYIYDEINPDDNSDYSEADENANTIGNIPLSFYDQYPHIGYNINGKKIMRPAMGQALDTLLDSIELPKGFTGLTDPSTGKPLELNQDELELLRKVQMNEITEDGYDPYQPTIEYFTSKLEIMPLNAAPEPKRRFVPSKHEAKRVMKLVKAIREGRILPYKPLTEKAEAEEGVWTYDLWANETPRADHPMHIPAPKLPPPGYEESYHPPPEYLPDEKEKAAWLNTDPEDREREYLPADYDALRKVPGYDSFVKEKFERCLDLYLAPRVRRSKLNIDPESLLPKLPSPEELKPFPSTCATLFRGHSGRVRTLAIDPTGVWLASGGDDGTVRVWELLTGRQIWSVKLSDEEPVNVIRWRPSKDAVVLAAATGDSIHLIVPPILDPEMEKASLDIVDAGWGYAKTLTSDSTKKTSAQWTRPSPSLLDSGVQAVISLGYVAKSLSWHRRGDYFVTVCPGTATPVSLAIAIHTLSKHLTQHPFRRRLKGGGPPQAAHFHPSKPILFVANQRTIRSYDLSRQSLVKILQPGARWISSFDIHPTSSTTSGGDNLIVGSYDRRLLWHDVDLSPRPYKTLRYHQKAIRAVRYHSNYPLFADASDDGSLQIFHGSVTGDLLSNASIVPLKVLRGHKVTGELGVLDLDWHPREAWCVSAGADGTCRLWT</sequence>
<keyword id="KW-0539">Nucleus</keyword>
<keyword id="KW-1185">Reference proteome</keyword>
<keyword id="KW-0677">Repeat</keyword>
<keyword id="KW-0690">Ribosome biogenesis</keyword>
<keyword id="KW-0698">rRNA processing</keyword>
<keyword id="KW-0853">WD repeat</keyword>
<organism>
    <name type="scientific">Ajellomyces capsulatus (strain NAm1 / WU24)</name>
    <name type="common">Darling's disease fungus</name>
    <name type="synonym">Histoplasma capsulatum</name>
    <dbReference type="NCBI Taxonomy" id="2059318"/>
    <lineage>
        <taxon>Eukaryota</taxon>
        <taxon>Fungi</taxon>
        <taxon>Dikarya</taxon>
        <taxon>Ascomycota</taxon>
        <taxon>Pezizomycotina</taxon>
        <taxon>Eurotiomycetes</taxon>
        <taxon>Eurotiomycetidae</taxon>
        <taxon>Onygenales</taxon>
        <taxon>Ajellomycetaceae</taxon>
        <taxon>Histoplasma</taxon>
    </lineage>
</organism>
<reference key="1">
    <citation type="journal article" date="2009" name="Genome Res.">
        <title>Comparative genomic analyses of the human fungal pathogens Coccidioides and their relatives.</title>
        <authorList>
            <person name="Sharpton T.J."/>
            <person name="Stajich J.E."/>
            <person name="Rounsley S.D."/>
            <person name="Gardner M.J."/>
            <person name="Wortman J.R."/>
            <person name="Jordar V.S."/>
            <person name="Maiti R."/>
            <person name="Kodira C.D."/>
            <person name="Neafsey D.E."/>
            <person name="Zeng Q."/>
            <person name="Hung C.-Y."/>
            <person name="McMahan C."/>
            <person name="Muszewska A."/>
            <person name="Grynberg M."/>
            <person name="Mandel M.A."/>
            <person name="Kellner E.M."/>
            <person name="Barker B.M."/>
            <person name="Galgiani J.N."/>
            <person name="Orbach M.J."/>
            <person name="Kirkland T.N."/>
            <person name="Cole G.T."/>
            <person name="Henn M.R."/>
            <person name="Birren B.W."/>
            <person name="Taylor J.W."/>
        </authorList>
    </citation>
    <scope>NUCLEOTIDE SEQUENCE [LARGE SCALE GENOMIC DNA]</scope>
    <source>
        <strain>NAm1 / WU24</strain>
    </source>
</reference>
<evidence type="ECO:0000255" key="1">
    <source>
        <dbReference type="HAMAP-Rule" id="MF_03027"/>
    </source>
</evidence>
<evidence type="ECO:0000256" key="2">
    <source>
        <dbReference type="SAM" id="MobiDB-lite"/>
    </source>
</evidence>
<evidence type="ECO:0000305" key="3"/>
<gene>
    <name evidence="1" type="primary">ERB1</name>
    <name type="ORF">HCAG_01968</name>
</gene>
<protein>
    <recommendedName>
        <fullName evidence="1">Ribosome biogenesis protein ERB1</fullName>
    </recommendedName>
    <alternativeName>
        <fullName evidence="1">Eukaryotic ribosome biogenesis protein 1</fullName>
    </alternativeName>
</protein>
<feature type="chain" id="PRO_0000370414" description="Ribosome biogenesis protein ERB1">
    <location>
        <begin position="1"/>
        <end position="788"/>
    </location>
</feature>
<feature type="repeat" description="WD 1">
    <location>
        <begin position="433"/>
        <end position="472"/>
    </location>
</feature>
<feature type="repeat" description="WD 2">
    <location>
        <begin position="476"/>
        <end position="516"/>
    </location>
</feature>
<feature type="repeat" description="WD 3">
    <location>
        <begin position="613"/>
        <end position="651"/>
    </location>
</feature>
<feature type="repeat" description="WD 4">
    <location>
        <begin position="654"/>
        <end position="699"/>
    </location>
</feature>
<feature type="repeat" description="WD 5">
    <location>
        <begin position="703"/>
        <end position="742"/>
    </location>
</feature>
<feature type="repeat" description="WD 6">
    <location>
        <begin position="758"/>
        <end position="788"/>
    </location>
</feature>
<feature type="region of interest" description="Disordered" evidence="2">
    <location>
        <begin position="1"/>
        <end position="91"/>
    </location>
</feature>
<feature type="compositionally biased region" description="Basic and acidic residues" evidence="2">
    <location>
        <begin position="38"/>
        <end position="50"/>
    </location>
</feature>
<feature type="compositionally biased region" description="Acidic residues" evidence="2">
    <location>
        <begin position="51"/>
        <end position="78"/>
    </location>
</feature>
<feature type="compositionally biased region" description="Basic and acidic residues" evidence="2">
    <location>
        <begin position="80"/>
        <end position="91"/>
    </location>
</feature>
<comment type="function">
    <text evidence="1">Component of the NOP7 complex, which is required for maturation of the 25S and 5.8S ribosomal RNAs and formation of the 60S ribosome.</text>
</comment>
<comment type="subunit">
    <text evidence="1">Component of the NOP7 complex, composed of ERB1, NOP7 and YTM1. The complex is held together by ERB1, which interacts with NOP7 via its N-terminal domain and with YTM1 via a high-affinity interaction between the seven-bladed beta-propeller domains of the 2 proteins. The NOP7 complex associates with the 66S pre-ribosome.</text>
</comment>
<comment type="subcellular location">
    <subcellularLocation>
        <location evidence="1">Nucleus</location>
        <location evidence="1">Nucleolus</location>
    </subcellularLocation>
    <subcellularLocation>
        <location evidence="1">Nucleus</location>
        <location evidence="1">Nucleoplasm</location>
    </subcellularLocation>
</comment>
<comment type="similarity">
    <text evidence="1">Belongs to the WD repeat BOP1/ERB1 family.</text>
</comment>
<comment type="sequence caution" evidence="3">
    <conflict type="erroneous initiation">
        <sequence resource="EMBL-CDS" id="EDN04103"/>
    </conflict>
</comment>
<proteinExistence type="inferred from homology"/>
<name>ERB1_AJECN</name>
<accession>A6QX61</accession>